<feature type="chain" id="PRO_0000176313" description="Elongation factor 4">
    <location>
        <begin position="1"/>
        <end position="605"/>
    </location>
</feature>
<feature type="domain" description="tr-type G">
    <location>
        <begin position="11"/>
        <end position="193"/>
    </location>
</feature>
<feature type="binding site" evidence="1">
    <location>
        <begin position="23"/>
        <end position="28"/>
    </location>
    <ligand>
        <name>GTP</name>
        <dbReference type="ChEBI" id="CHEBI:37565"/>
    </ligand>
</feature>
<feature type="binding site" evidence="1">
    <location>
        <begin position="140"/>
        <end position="143"/>
    </location>
    <ligand>
        <name>GTP</name>
        <dbReference type="ChEBI" id="CHEBI:37565"/>
    </ligand>
</feature>
<dbReference type="EC" id="3.6.5.n1" evidence="1"/>
<dbReference type="EMBL" id="AP006628">
    <property type="protein sequence ID" value="BAD04530.1"/>
    <property type="molecule type" value="Genomic_DNA"/>
</dbReference>
<dbReference type="SMR" id="P60792"/>
<dbReference type="STRING" id="262768.PAM_445"/>
<dbReference type="KEGG" id="poy:PAM_445"/>
<dbReference type="eggNOG" id="COG0481">
    <property type="taxonomic scope" value="Bacteria"/>
</dbReference>
<dbReference type="HOGENOM" id="CLU_009995_3_3_14"/>
<dbReference type="BioCyc" id="OYEL262768:G1G26-525-MONOMER"/>
<dbReference type="Proteomes" id="UP000002523">
    <property type="component" value="Chromosome"/>
</dbReference>
<dbReference type="GO" id="GO:0005886">
    <property type="term" value="C:plasma membrane"/>
    <property type="evidence" value="ECO:0007669"/>
    <property type="project" value="UniProtKB-SubCell"/>
</dbReference>
<dbReference type="GO" id="GO:0005525">
    <property type="term" value="F:GTP binding"/>
    <property type="evidence" value="ECO:0007669"/>
    <property type="project" value="UniProtKB-UniRule"/>
</dbReference>
<dbReference type="GO" id="GO:0003924">
    <property type="term" value="F:GTPase activity"/>
    <property type="evidence" value="ECO:0007669"/>
    <property type="project" value="UniProtKB-UniRule"/>
</dbReference>
<dbReference type="GO" id="GO:0043022">
    <property type="term" value="F:ribosome binding"/>
    <property type="evidence" value="ECO:0007669"/>
    <property type="project" value="UniProtKB-UniRule"/>
</dbReference>
<dbReference type="GO" id="GO:0003746">
    <property type="term" value="F:translation elongation factor activity"/>
    <property type="evidence" value="ECO:0007669"/>
    <property type="project" value="UniProtKB-UniRule"/>
</dbReference>
<dbReference type="GO" id="GO:0045727">
    <property type="term" value="P:positive regulation of translation"/>
    <property type="evidence" value="ECO:0007669"/>
    <property type="project" value="UniProtKB-UniRule"/>
</dbReference>
<dbReference type="CDD" id="cd03699">
    <property type="entry name" value="EF4_II"/>
    <property type="match status" value="1"/>
</dbReference>
<dbReference type="CDD" id="cd16260">
    <property type="entry name" value="EF4_III"/>
    <property type="match status" value="1"/>
</dbReference>
<dbReference type="CDD" id="cd01890">
    <property type="entry name" value="LepA"/>
    <property type="match status" value="1"/>
</dbReference>
<dbReference type="CDD" id="cd03709">
    <property type="entry name" value="lepA_C"/>
    <property type="match status" value="1"/>
</dbReference>
<dbReference type="FunFam" id="3.40.50.300:FF:000078">
    <property type="entry name" value="Elongation factor 4"/>
    <property type="match status" value="1"/>
</dbReference>
<dbReference type="FunFam" id="2.40.30.10:FF:000015">
    <property type="entry name" value="Translation factor GUF1, mitochondrial"/>
    <property type="match status" value="1"/>
</dbReference>
<dbReference type="FunFam" id="3.30.70.240:FF:000007">
    <property type="entry name" value="Translation factor GUF1, mitochondrial"/>
    <property type="match status" value="1"/>
</dbReference>
<dbReference type="FunFam" id="3.30.70.2570:FF:000001">
    <property type="entry name" value="Translation factor GUF1, mitochondrial"/>
    <property type="match status" value="1"/>
</dbReference>
<dbReference type="FunFam" id="3.30.70.870:FF:000004">
    <property type="entry name" value="Translation factor GUF1, mitochondrial"/>
    <property type="match status" value="1"/>
</dbReference>
<dbReference type="Gene3D" id="3.30.70.240">
    <property type="match status" value="1"/>
</dbReference>
<dbReference type="Gene3D" id="3.30.70.2570">
    <property type="entry name" value="Elongation factor 4, C-terminal domain"/>
    <property type="match status" value="1"/>
</dbReference>
<dbReference type="Gene3D" id="3.30.70.870">
    <property type="entry name" value="Elongation Factor G (Translational Gtpase), domain 3"/>
    <property type="match status" value="1"/>
</dbReference>
<dbReference type="Gene3D" id="3.40.50.300">
    <property type="entry name" value="P-loop containing nucleotide triphosphate hydrolases"/>
    <property type="match status" value="1"/>
</dbReference>
<dbReference type="Gene3D" id="2.40.30.10">
    <property type="entry name" value="Translation factors"/>
    <property type="match status" value="1"/>
</dbReference>
<dbReference type="HAMAP" id="MF_00071">
    <property type="entry name" value="LepA"/>
    <property type="match status" value="1"/>
</dbReference>
<dbReference type="InterPro" id="IPR006297">
    <property type="entry name" value="EF-4"/>
</dbReference>
<dbReference type="InterPro" id="IPR035647">
    <property type="entry name" value="EFG_III/V"/>
</dbReference>
<dbReference type="InterPro" id="IPR000640">
    <property type="entry name" value="EFG_V-like"/>
</dbReference>
<dbReference type="InterPro" id="IPR004161">
    <property type="entry name" value="EFTu-like_2"/>
</dbReference>
<dbReference type="InterPro" id="IPR031157">
    <property type="entry name" value="G_TR_CS"/>
</dbReference>
<dbReference type="InterPro" id="IPR038363">
    <property type="entry name" value="LepA_C_sf"/>
</dbReference>
<dbReference type="InterPro" id="IPR013842">
    <property type="entry name" value="LepA_CTD"/>
</dbReference>
<dbReference type="InterPro" id="IPR035654">
    <property type="entry name" value="LepA_IV"/>
</dbReference>
<dbReference type="InterPro" id="IPR027417">
    <property type="entry name" value="P-loop_NTPase"/>
</dbReference>
<dbReference type="InterPro" id="IPR005225">
    <property type="entry name" value="Small_GTP-bd"/>
</dbReference>
<dbReference type="InterPro" id="IPR000795">
    <property type="entry name" value="T_Tr_GTP-bd_dom"/>
</dbReference>
<dbReference type="NCBIfam" id="TIGR01393">
    <property type="entry name" value="lepA"/>
    <property type="match status" value="1"/>
</dbReference>
<dbReference type="NCBIfam" id="TIGR00231">
    <property type="entry name" value="small_GTP"/>
    <property type="match status" value="1"/>
</dbReference>
<dbReference type="PANTHER" id="PTHR43512:SF4">
    <property type="entry name" value="TRANSLATION FACTOR GUF1 HOMOLOG, CHLOROPLASTIC"/>
    <property type="match status" value="1"/>
</dbReference>
<dbReference type="PANTHER" id="PTHR43512">
    <property type="entry name" value="TRANSLATION FACTOR GUF1-RELATED"/>
    <property type="match status" value="1"/>
</dbReference>
<dbReference type="Pfam" id="PF00679">
    <property type="entry name" value="EFG_C"/>
    <property type="match status" value="1"/>
</dbReference>
<dbReference type="Pfam" id="PF00009">
    <property type="entry name" value="GTP_EFTU"/>
    <property type="match status" value="1"/>
</dbReference>
<dbReference type="Pfam" id="PF03144">
    <property type="entry name" value="GTP_EFTU_D2"/>
    <property type="match status" value="1"/>
</dbReference>
<dbReference type="Pfam" id="PF06421">
    <property type="entry name" value="LepA_C"/>
    <property type="match status" value="1"/>
</dbReference>
<dbReference type="PRINTS" id="PR00315">
    <property type="entry name" value="ELONGATNFCT"/>
</dbReference>
<dbReference type="SMART" id="SM00838">
    <property type="entry name" value="EFG_C"/>
    <property type="match status" value="1"/>
</dbReference>
<dbReference type="SUPFAM" id="SSF54980">
    <property type="entry name" value="EF-G C-terminal domain-like"/>
    <property type="match status" value="2"/>
</dbReference>
<dbReference type="SUPFAM" id="SSF52540">
    <property type="entry name" value="P-loop containing nucleoside triphosphate hydrolases"/>
    <property type="match status" value="1"/>
</dbReference>
<dbReference type="PROSITE" id="PS00301">
    <property type="entry name" value="G_TR_1"/>
    <property type="match status" value="1"/>
</dbReference>
<dbReference type="PROSITE" id="PS51722">
    <property type="entry name" value="G_TR_2"/>
    <property type="match status" value="1"/>
</dbReference>
<gene>
    <name evidence="1" type="primary">lepA</name>
    <name type="ordered locus">PAM_445</name>
</gene>
<keyword id="KW-1003">Cell membrane</keyword>
<keyword id="KW-0342">GTP-binding</keyword>
<keyword id="KW-0378">Hydrolase</keyword>
<keyword id="KW-0472">Membrane</keyword>
<keyword id="KW-0547">Nucleotide-binding</keyword>
<keyword id="KW-0648">Protein biosynthesis</keyword>
<evidence type="ECO:0000255" key="1">
    <source>
        <dbReference type="HAMAP-Rule" id="MF_00071"/>
    </source>
</evidence>
<protein>
    <recommendedName>
        <fullName evidence="1">Elongation factor 4</fullName>
        <shortName evidence="1">EF-4</shortName>
        <ecNumber evidence="1">3.6.5.n1</ecNumber>
    </recommendedName>
    <alternativeName>
        <fullName evidence="1">Ribosomal back-translocase LepA</fullName>
    </alternativeName>
</protein>
<comment type="function">
    <text evidence="1">Required for accurate and efficient protein synthesis under certain stress conditions. May act as a fidelity factor of the translation reaction, by catalyzing a one-codon backward translocation of tRNAs on improperly translocated ribosomes. Back-translocation proceeds from a post-translocation (POST) complex to a pre-translocation (PRE) complex, thus giving elongation factor G a second chance to translocate the tRNAs correctly. Binds to ribosomes in a GTP-dependent manner.</text>
</comment>
<comment type="catalytic activity">
    <reaction evidence="1">
        <text>GTP + H2O = GDP + phosphate + H(+)</text>
        <dbReference type="Rhea" id="RHEA:19669"/>
        <dbReference type="ChEBI" id="CHEBI:15377"/>
        <dbReference type="ChEBI" id="CHEBI:15378"/>
        <dbReference type="ChEBI" id="CHEBI:37565"/>
        <dbReference type="ChEBI" id="CHEBI:43474"/>
        <dbReference type="ChEBI" id="CHEBI:58189"/>
        <dbReference type="EC" id="3.6.5.n1"/>
    </reaction>
</comment>
<comment type="subcellular location">
    <subcellularLocation>
        <location evidence="1">Cell membrane</location>
        <topology evidence="1">Peripheral membrane protein</topology>
        <orientation evidence="1">Cytoplasmic side</orientation>
    </subcellularLocation>
</comment>
<comment type="similarity">
    <text evidence="1">Belongs to the TRAFAC class translation factor GTPase superfamily. Classic translation factor GTPase family. LepA subfamily.</text>
</comment>
<name>LEPA_ONYPE</name>
<sequence>MNIEQLKERQKRIRNFSIIAHIDHGKSTLADRILEFTGTIDKRIMKEQILDSMDLERERGITIKLNAVEINYKSKDGKNYIMHLIDTPGHVDFSYEVSRSLAACEGAILIIDAAQGIQAQTLANVYLAVDNNLTLIPVLNKVDLPSADVPKVKEEIKETLGLDPEQALIASGKTGLGVIDILEQIVTRISPPQGDIQKPLQALIFDSYFDSYKGVVPSIRIVNGTVKKGDQIRFMASNSVYEVVEVGVYNPKQIVKDFLAPGDVGYLTAAIKSINHVRVGDTITSQTNQALLPLPGYKQMNSVVFCGLYPVETNKYDILKEALEKLKLNDSSLIFEPESSNALGLGFRTGFLGLLHMEIIQERISREFGVEVIATAPSVIYHVYSIKGEKLLVDNPSKLPSTQMIDRIEEPFIKATIMCPEIYIGKVMELSQNKRGALQNIEYIDSQRVMINYLLPFSEIIYSYFDKLKSLTKGYASFDYEIDKYRVSKLQKMDILLNGEIVDALSLIVHHDFAYERGKAICETLKEFIPKQMFEIPIQAALGKKIIARQTIKAMRKDVTAKLYGGDVTRKKKLLEKQKKGKKKMKTLGKVQLPQKAFLAILATK</sequence>
<organism>
    <name type="scientific">Onion yellows phytoplasma (strain OY-M)</name>
    <dbReference type="NCBI Taxonomy" id="262768"/>
    <lineage>
        <taxon>Bacteria</taxon>
        <taxon>Bacillati</taxon>
        <taxon>Mycoplasmatota</taxon>
        <taxon>Mollicutes</taxon>
        <taxon>Acholeplasmatales</taxon>
        <taxon>Acholeplasmataceae</taxon>
        <taxon>Candidatus Phytoplasma</taxon>
        <taxon>16SrI (Aster yellows group)</taxon>
    </lineage>
</organism>
<reference key="1">
    <citation type="journal article" date="2004" name="Nat. Genet.">
        <title>Reductive evolution suggested from the complete genome sequence of a plant-pathogenic phytoplasma.</title>
        <authorList>
            <person name="Oshima K."/>
            <person name="Kakizawa S."/>
            <person name="Nishigawa H."/>
            <person name="Jung H.-Y."/>
            <person name="Wei W."/>
            <person name="Suzuki S."/>
            <person name="Arashida R."/>
            <person name="Nakata D."/>
            <person name="Miyata S."/>
            <person name="Ugaki M."/>
            <person name="Namba S."/>
        </authorList>
    </citation>
    <scope>NUCLEOTIDE SEQUENCE [LARGE SCALE GENOMIC DNA]</scope>
    <source>
        <strain>OY-M</strain>
    </source>
</reference>
<proteinExistence type="inferred from homology"/>
<accession>P60792</accession>